<reference key="1">
    <citation type="journal article" date="1994" name="Nature">
        <title>2.2 Mb of contiguous nucleotide sequence from chromosome III of C. elegans.</title>
        <authorList>
            <person name="Wilson R."/>
            <person name="Ainscough R."/>
            <person name="Anderson K."/>
            <person name="Baynes C."/>
            <person name="Berks M."/>
            <person name="Bonfield J."/>
            <person name="Burton J."/>
            <person name="Connell M."/>
            <person name="Copsey T."/>
            <person name="Cooper J."/>
            <person name="Coulson A."/>
            <person name="Craxton M."/>
            <person name="Dear S."/>
            <person name="Du Z."/>
            <person name="Durbin R."/>
            <person name="Favello A."/>
            <person name="Fraser A."/>
            <person name="Fulton L."/>
            <person name="Gardner A."/>
            <person name="Green P."/>
            <person name="Hawkins T."/>
            <person name="Hillier L."/>
            <person name="Jier M."/>
            <person name="Johnston L."/>
            <person name="Jones M."/>
            <person name="Kershaw J."/>
            <person name="Kirsten J."/>
            <person name="Laisster N."/>
            <person name="Latreille P."/>
            <person name="Lightning J."/>
            <person name="Lloyd C."/>
            <person name="Mortimore B."/>
            <person name="O'Callaghan M."/>
            <person name="Parsons J."/>
            <person name="Percy C."/>
            <person name="Rifken L."/>
            <person name="Roopra A."/>
            <person name="Saunders D."/>
            <person name="Shownkeen R."/>
            <person name="Sims M."/>
            <person name="Smaldon N."/>
            <person name="Smith A."/>
            <person name="Smith M."/>
            <person name="Sonnhammer E."/>
            <person name="Staden R."/>
            <person name="Sulston J."/>
            <person name="Thierry-Mieg J."/>
            <person name="Thomas K."/>
            <person name="Vaudin M."/>
            <person name="Vaughan K."/>
            <person name="Waterston R."/>
            <person name="Watson A."/>
            <person name="Weinstock L."/>
            <person name="Wilkinson-Sproat J."/>
            <person name="Wohldman P."/>
        </authorList>
    </citation>
    <scope>NUCLEOTIDE SEQUENCE [LARGE SCALE GENOMIC DNA]</scope>
    <source>
        <strain>Bristol N2</strain>
    </source>
</reference>
<reference key="2">
    <citation type="journal article" date="1998" name="Science">
        <title>Genome sequence of the nematode C. elegans: a platform for investigating biology.</title>
        <authorList>
            <consortium name="The C. elegans sequencing consortium"/>
        </authorList>
    </citation>
    <scope>NUCLEOTIDE SEQUENCE [LARGE SCALE GENOMIC DNA]</scope>
    <source>
        <strain>Bristol N2</strain>
    </source>
</reference>
<keyword id="KW-0378">Hydrolase</keyword>
<keyword id="KW-1185">Reference proteome</keyword>
<feature type="chain" id="PRO_0000156699" description="Putative esterase F42H10.6">
    <location>
        <begin position="1"/>
        <end position="169"/>
    </location>
</feature>
<dbReference type="EC" id="3.1.2.-"/>
<dbReference type="EMBL" id="FO080327">
    <property type="protein sequence ID" value="CCD62884.1"/>
    <property type="molecule type" value="Genomic_DNA"/>
</dbReference>
<dbReference type="RefSeq" id="NP_498872.1">
    <property type="nucleotide sequence ID" value="NM_066471.6"/>
</dbReference>
<dbReference type="SMR" id="P34419"/>
<dbReference type="BioGRID" id="41402">
    <property type="interactions" value="7"/>
</dbReference>
<dbReference type="FunCoup" id="P34419">
    <property type="interactions" value="309"/>
</dbReference>
<dbReference type="IntAct" id="P34419">
    <property type="interactions" value="2"/>
</dbReference>
<dbReference type="STRING" id="6239.F42H10.6.1"/>
<dbReference type="PaxDb" id="6239-F42H10.6.1"/>
<dbReference type="PeptideAtlas" id="P34419"/>
<dbReference type="EnsemblMetazoa" id="F42H10.6.1">
    <property type="protein sequence ID" value="F42H10.6.1"/>
    <property type="gene ID" value="WBGene00018370"/>
</dbReference>
<dbReference type="EnsemblMetazoa" id="F42H10.6.2">
    <property type="protein sequence ID" value="F42H10.6.2"/>
    <property type="gene ID" value="WBGene00018370"/>
</dbReference>
<dbReference type="GeneID" id="176198"/>
<dbReference type="KEGG" id="cel:CELE_F42H10.6"/>
<dbReference type="UCSC" id="F42H10.6.2">
    <property type="organism name" value="c. elegans"/>
</dbReference>
<dbReference type="AGR" id="WB:WBGene00018370"/>
<dbReference type="CTD" id="176198"/>
<dbReference type="WormBase" id="F42H10.6">
    <property type="protein sequence ID" value="CE24969"/>
    <property type="gene ID" value="WBGene00018370"/>
</dbReference>
<dbReference type="eggNOG" id="KOG3328">
    <property type="taxonomic scope" value="Eukaryota"/>
</dbReference>
<dbReference type="HOGENOM" id="CLU_089876_12_2_1"/>
<dbReference type="InParanoid" id="P34419"/>
<dbReference type="OMA" id="MAFTDCE"/>
<dbReference type="OrthoDB" id="46529at2759"/>
<dbReference type="PhylomeDB" id="P34419"/>
<dbReference type="PRO" id="PR:P34419"/>
<dbReference type="Proteomes" id="UP000001940">
    <property type="component" value="Chromosome III"/>
</dbReference>
<dbReference type="Bgee" id="WBGene00018370">
    <property type="expression patterns" value="Expressed in germ line (C elegans) and 4 other cell types or tissues"/>
</dbReference>
<dbReference type="GO" id="GO:0047617">
    <property type="term" value="F:fatty acyl-CoA hydrolase activity"/>
    <property type="evidence" value="ECO:0000318"/>
    <property type="project" value="GO_Central"/>
</dbReference>
<dbReference type="GO" id="GO:0042802">
    <property type="term" value="F:identical protein binding"/>
    <property type="evidence" value="ECO:0000353"/>
    <property type="project" value="IntAct"/>
</dbReference>
<dbReference type="CDD" id="cd03443">
    <property type="entry name" value="PaaI_thioesterase"/>
    <property type="match status" value="1"/>
</dbReference>
<dbReference type="FunFam" id="3.10.129.10:FF:000088">
    <property type="entry name" value="Putative esterase F42H10.6"/>
    <property type="match status" value="1"/>
</dbReference>
<dbReference type="Gene3D" id="3.10.129.10">
    <property type="entry name" value="Hotdog Thioesterase"/>
    <property type="match status" value="1"/>
</dbReference>
<dbReference type="InterPro" id="IPR039298">
    <property type="entry name" value="ACOT13"/>
</dbReference>
<dbReference type="InterPro" id="IPR029069">
    <property type="entry name" value="HotDog_dom_sf"/>
</dbReference>
<dbReference type="InterPro" id="IPR003736">
    <property type="entry name" value="PAAI_dom"/>
</dbReference>
<dbReference type="InterPro" id="IPR006683">
    <property type="entry name" value="Thioestr_dom"/>
</dbReference>
<dbReference type="NCBIfam" id="TIGR00369">
    <property type="entry name" value="unchar_dom_1"/>
    <property type="match status" value="1"/>
</dbReference>
<dbReference type="PANTHER" id="PTHR21660:SF1">
    <property type="entry name" value="ACYL-COENZYME A THIOESTERASE 13"/>
    <property type="match status" value="1"/>
</dbReference>
<dbReference type="PANTHER" id="PTHR21660">
    <property type="entry name" value="THIOESTERASE SUPERFAMILY MEMBER-RELATED"/>
    <property type="match status" value="1"/>
</dbReference>
<dbReference type="Pfam" id="PF03061">
    <property type="entry name" value="4HBT"/>
    <property type="match status" value="1"/>
</dbReference>
<dbReference type="SUPFAM" id="SSF54637">
    <property type="entry name" value="Thioesterase/thiol ester dehydrase-isomerase"/>
    <property type="match status" value="1"/>
</dbReference>
<name>YLZ6_CAEEL</name>
<organism>
    <name type="scientific">Caenorhabditis elegans</name>
    <dbReference type="NCBI Taxonomy" id="6239"/>
    <lineage>
        <taxon>Eukaryota</taxon>
        <taxon>Metazoa</taxon>
        <taxon>Ecdysozoa</taxon>
        <taxon>Nematoda</taxon>
        <taxon>Chromadorea</taxon>
        <taxon>Rhabditida</taxon>
        <taxon>Rhabditina</taxon>
        <taxon>Rhabditomorpha</taxon>
        <taxon>Rhabditoidea</taxon>
        <taxon>Rhabditidae</taxon>
        <taxon>Peloderinae</taxon>
        <taxon>Caenorhabditis</taxon>
    </lineage>
</organism>
<gene>
    <name type="ORF">F42H10.6</name>
</gene>
<sequence>MVGHSESSTDAVIEPTSEELLAEQVRVFNKMKGSTNFNRVAEDVYPVEVTKSKLVCEMVVQHQHLNSKGTLHGGQTATLTDVITARAVGVTVKDKGMASVELAVSYLLPVKVGDVLEITAHVLKVGRTMAFTDCEFRRKSDGKMSAKGKHTLAFLPNQPGISVENGTQF</sequence>
<protein>
    <recommendedName>
        <fullName>Putative esterase F42H10.6</fullName>
        <ecNumber>3.1.2.-</ecNumber>
    </recommendedName>
</protein>
<comment type="interaction">
    <interactant intactId="EBI-321928">
        <id>P34419</id>
    </interactant>
    <interactant intactId="EBI-321928">
        <id>P34419</id>
        <label>F42H10.6</label>
    </interactant>
    <organismsDiffer>false</organismsDiffer>
    <experiments>3</experiments>
</comment>
<comment type="similarity">
    <text evidence="1">Belongs to the thioesterase paaI family.</text>
</comment>
<accession>P34419</accession>
<evidence type="ECO:0000305" key="1"/>
<proteinExistence type="evidence at protein level"/>